<comment type="function">
    <text evidence="8 11">Nonribosomal peptide synthetase; part of the gene cluster that mediates the biosynthesis of malformins, cyclic pentapeptides with a disulfide bond between 2 consecutive cysteins, that show potential anti-tumor as well as antimalarial and antitrypanosomal properties (PubMed:30560908). The nonribosomal peptide synthetase mlfA is responsible of the formation of the cyclic pentapeptide (Probable). The malformin biosynthesis clusters in malformin-producing fungi also contain enzymes involved in the formation of the disulfide bond between the two consecutive cysteins within malformins, in addition to additional tailoring enzymes such as methyltransferases or oxidoreductases. They are also composed of up to 4 major facilitator superfamily transporters, and transcription factors probably involved in the regulation of the expression of those clusters (Probable).</text>
</comment>
<comment type="pathway">
    <text evidence="11">Secondary metabolite biosynthesis.</text>
</comment>
<comment type="domain">
    <text evidence="11">NRP synthetases are composed of discrete domains (adenylation (A), thiolation (T) or peptidyl carrier protein (PCP) and condensation (C) domains) which when grouped together are referred to as a single module. Each module is responsible for the recognition (via the A domain) and incorporation of a single amino acid into the growing peptide product. Thus, an NRP synthetase is generally composed of one or more modules and can terminate in a thioesterase domain (TE) that releases the newly synthesized peptide from the enzyme. Occasionally, epimerase (E) domains (responsible for L- to D- amino acid conversion) are present within the NRP synthetase. MlfA has the following architecture: A-T-C-A-T-C-A-T-C-C-A-T-C, with the functions of the five condensation domains during malformin biosynthesis being DL-joining (epimerizing subtype), LL-joining, epimerization, DL-joining and cyclizing domain, respectively.</text>
</comment>
<comment type="biotechnology">
    <text evidence="4 5 6 7">Malformins show anti-tumor properties against human colorectal and prostate cancer cells by the inhibition of proliferation and induction of apoptosis through the activation of the p38 signaling pathway (PubMed:26540166, PubMed:26645406, PubMed:28713983). Malformin C has also been shown to exhibit potent antimalarial and antitrypanosomal properties (PubMed:19876076).</text>
</comment>
<comment type="similarity">
    <text evidence="10">Belongs to the NRP synthetase family.</text>
</comment>
<proteinExistence type="evidence at protein level"/>
<name>MLFA_ASPTC</name>
<accession>A0A1L9NGU5</accession>
<sequence>MSRFSCIFPTLTDGYIPKPDHTCAAGRRTYTIDLSGWKAPGSETESHILAAWGLVLSSYVGTDEVAFYVVPTTGPDTTALADLKVEGDMSRQSLTYAAMQLLHPALVGAGQVSGETANTIITFAKDIESLFVTQTEAANVGTAMAQALAEVGTCDNDRIIKDLNLMSPAHLEHIWRFNANVPGIWEECFHDVIERHATNRPHSLAVDAWDTKLTYADLVREARLLAAYLQQRGVGPGSVVPISFERSGAALVAMLAVSKAGSAFVSVPPNLPAGRLDAILDVIEAPFVVTWTKYESFWAERLPTLPIDNYPKPAADATVEALGKPEDLFYVIFTSGSTGRPKGCMLSHSNWLNGALRNAPSWKYGPESRVLQMLSHTFDMSLLEICTSLGSGACVCVPRTEEIETSISDAINRWQVNHVIMTPSLARALRPDDVPGLKTMCLGGEAFPKEIVTMWSERINLWQFYGPSECSINSSSRPITRPDADPLNIGPPNSAACWVTDVHDYNKLVPVGAIGELLVSGPIVGMGYLKNPVKTAEAFLEEVGFVAKDDPQFGGFRFYRTGDLVRWNSDGTITFCGRADTQVKLNGQRLELAEVEYQLGLESGVQYAIAMAPQAGLCKNNLIAILTVKGTSTGNQDTAADEIPLLDRRDPIVQETVKRLRSQLQHALPRYMVPTIWAFVGRMPMSASGKIDRVQLRDWVQKMSQETFDAITGRSLEAEDHVLGLSRLEQEVQLAWAEALGLSAAEVGLQQPFVALGGDSIMALDAVARCRARQIKISMVHILSCEGVREAASLAEVQETPAQQVAEMAVDYSNLWTRLSDDYDLDKLGVTQLEEVEDVFPCTTMQEGMFLGQIRRPGAYHMRFFHRVQLKGGCLPTVERIQQAWASLVERHPSLRTVFVDDLSPEAIYHSIVLRSVPMELRMREVPRDLRAEAALAMFTEELVPFRANAPLHRMLLLTCRGRVPYFMLEISHVIMDGYALSVFRREFIRACSSSAPLPRGPDYRMFANYHRTRQTDDSARYWTNYLADCVPCHIPTHAVSAPSDGPPEWPRTLQRRDFGFDNSAAFLQRCKERQVTLACAIRAAWALVLRAYTQSQDVCFGYVSSGRNVPVPEVETIFGLCLSMQVCRARLSEASTIASIAKKIQEDYVASLPFQHYPLAEAQRGLKQTHGQGLFNTAISMEWVPPSAEDEDALLDLEEIREQDDPTEYDIAISVDVHEGHIKLGFLYWPNLTDFEITHLAEALQGAMNCFVFQPDEALNTLSLLQASDVCSALADGPTLLPLEAVRGNVVSMIDRWVTRHPEGAAIDGWDGSLTYKELHEQSSWVARNLLHQGVQLGDRILVCADRSSRTVATVLGIVRAGCVLVLSNPTDPAKRLQWLAKRCNAALIVADPTYEERFATADARVLSTTSVCAPAAWDYEFPALDEHDLISILFTSGSTGTPKGILMEHGALATSVLLGHGRTLRFSRHTRMLHFASLTFDAALAEIFTTLAHGGCICVPCEEDRLSDVPGCISRFAVNMAMLTPSVGRLLEPGALPTLKSLIMVGEPMSRLDVERFAPVLDLYNGAGPTETSIMVTIAGPMKPTDEPVDLGYAVAGVRLWVTEAENPNRLAPLGAVGELVVEGRLVTRGYLDDPARTHEAFLPSLPWLPSQHALYRTGDLVRYADDGSLRYMGRKDTQVKLRGQRIELQEVEYHLRKSLQQAQIVVEMVVPAGKMRAQASLVAFVSGLTAADVESSSACNLEGMIPISQIVLPKSAFKALEEALPRHMIPSVYYALDTIPLSVNGKADRRRLREMGSLLLASSAAHKNTIEGMSKSVKWTPASELERTLLELMAATLGLEAETMHGDDSFFELGGDSVSAMKLVATARDKYKLSLSVPQMFRYPTICQLAAEVGEPAGQSASSASSTTEEGFTFSTPDDSSTNDGVDDDFLQLATAQLAQLAQEKGKKVDIAALLKQLQGGSSSNKTPSVSSSSSSSSSSKRKKKAALAEAAAPISVQFSLLDGGADVLDKVRAQAVEHCKIPHEDIEDIYPATALQEGMIALTARTPGVYTTTLTCDLSEQVDLARLHYAWGKAAEAHPILRTRIILTDNNTAVQVVQRAKGLPWDTYSLREGDVLPDLTSNMTSGSPLLRLAVVHRQNQPRMLLVAIHHALYDGWSMPLLKEAVEDAYHGRDLRPQPFTPFIKHLIAGKVAAQAFWTTHLDSFAGGVFPNLPGVDHQVQPKERRTRSLTMPTATPRAQYTMATKIQAAWAVTVSRYAEDNDVVFGSVSTGRSAPVPAIDRMVGPTITTVPVRISLGDQAERLTSLLQRVQDDSWERMDHEHLGLQHIRRLGESAAAACGFQTLLVIQPREQPNNKYRSTLLSSLQDVAELEGVDTYPLMLVCEPDGARLHLSAVFDPVVLDGVTLERMLANWELVLTQLWNEPDMAVLELDAVSCSDTETLIRWNTGETIADGCAHDAVCEWSSRTPHAPAVCAWDGEWTYEELERCSSLVASQILAHDVSSGDFIALYHEKSRWAAAGILAVFKAGAILITLDPAHPTDRIKNILDQARPRLILTSQSLLDVARNLETPALSVQFAASQPLPEGWSSLPTISSTQAAYAPFTSGSTGRPKGIPLDHRGLAASTASIAHSCLLRPASRVLHFASFAFDASMMEHLIAWRAGGCLCIPDETARQTDLAKCIRDFNVTWAFLTPSCLRLITPDDVPSLQALGLGGESMTSEDIAIWSPRLRQIVQLYGPAECCIVAALTEVTKPSENRLIGRPNACRCWVVDLQNPDRLAPIGAVGELLIEGITVGRGYINDPDRTTPVFIRPPKWLQTLYPDDQEPKRLYRTGDLVRYADVDGKLAFIGRRDGQLKLHGQRIELADIEAHLRPLIPATQKMAVEMLHSADNQNLILAAFLEEMSTSQKPTEREVKLLHPSQSQCALNVMAIDSALSRKVPQYMIPSMYLHISRLPLSASGKLDRRHLREMIAELPRQRLNEYAAGSGLRVPDRPKTSQEQEMQAIWARVLSLDPNTIGVNDDFFRIGGDSISGMQVATKCNAAGIHITSADLFRHRTIEQLICHLNSIRTTDCASVSLPAEPVDEWVALAPIQQLFFEVAPEGPNHFNQSLLLRTSRRVSVEELAGGLDILVGRHSMLRARFCRKDSGQWFQQVKSLGSEPASNFYRLAAHNQITRESLPTLFTTAQMALSIQDGPLLTVDLVELEDGRQLVYLAAHHLIIDLVSWRILHGELEEYLQTDSLSSATGSVPFITWSQLQAEYSAEHLTPARAFPGFQEANDDFDVMRYWGISSESNTFGQTSISRFTLDRTVTDILFGSANKVMDTRPVEILQAALWYSCNQALTDRPGPSIYVEGHGREPWTDAINVSGTVGWFTTMSPLVSTPWDHLSRTSMRDFVDALSYIKDQRRRIPANGWAYFTSRYLNDEGRVAYGRTKPVVEVLFNYMGQYQEMNREGAMLQLAGNDIQSGTGASDIADNVPRFSLIDVSAFTANGCLTFEFTFPQLMQQDARLEQCIKECERTLVAAASSLSAEGPRKTLTDFPLMSALTYDQLSQFLDHTLPSLGLRAQDVLDIYPCSPVQQGMLLAQLRDRQAYQQRFRFQVMSRVPTDQLPLEKVKGAWTEVINRHDILRTLLLPVSDHSHFDQVVMVPGSLQHLVRLNAMDTNPADGLPHTINITSDSADTIICEWKVSHALVDAMSIAVIQREVNQAFEGSLGQYRDVPQYVDYIKWLSLQDNTEAQAYWQNHLKEVEPCLFPQLTSSPNPINPEGTISAIRATWTRDARMDDLCHKHAITLTNLFQIVWAVVLGAYVGTDEVCFGYTTLGRDVPVDGVETMVGPLVNVLAATVQLKQDESILNALLTHQNRLTSSLQHQHYALADVYACLGLAGSQLFNTIVSLQDISHFDVPDERGTRLEMLPANDVSEYNVALNIGVDKSSIQLVCSYQTVSLSAEQADALLRTVFHVLGEILRDPTQRFCELEVISPKCKEQLVKWNAGMLAPTDEYIHEKIQGQCRIHASRQAVCAWDGMFTYAEVDDLSSRLAARLIRMGVTSEDIIPIYSPKSRWTVIAILGVLKAGAAFTLLETSHPMARLHMICNQIKAPMIIAPASHAVPAANLAPILVVLDNITSLAQEKLDPFPGIGIPPAGEALAYLIFTSGSTGNPKGVMVTHQNLCSNASIITTSVNMTSDSRVLQFASHAFDGCLWEILGALLAGACLIIPSESENKEDLTGCIERMDVTWAFLTPSVARILKPETLPSLCNLVLGGEPIAASDLDMWRGHVQVVCAYGPTETTILASTTSPSTFPTDGKDIGTPTGSSLWIVDTRNYQTMVPLGATGELLIEGPNVSQGYLGDPEKTNDAFPDAPRWLSQLRKSPTRVYRTGDLVRFDTTAGTIRFVGRKDNQIKFHGQRIELGEIEHHAQLAFSSASTVIVDLITPEQPQQPYIVAFVHLPDATPETTETMDTILLPPSESFRADALAAQKKMHKRLPHYMVPAAFLPLHRFPLSATGKADRKRLRQCALGLSSPDLSAYRATASTKRMPSTAAERKMQLLVASVLGRDPTEIGMDDSFFYLGGDSVQAMRLVAEGRQQGLSLSLRAIFDSPRLRDLGDQARSPNADNQRVSTASSAGLRDNRDQIDKVVATNSLKKADVADVLPTTSFQRHWLDAQLKSYIVVDIPGPIDPARLLRAMHRVVEAHPILRVSFVPYETTTLQIILRTAAAMTNVDVSTTTVDFSTTTVEDICRQDAGAQLPPGVPYLRVILATQDKADHKLIMRLSHAQYDAVSLSLLMNDLSHAYATETHALPSSHFPRFNDYITYQQAQRADPTATTFWRLLLQNVSLTYLNLQPAESSASNGTPITLSRDINIATFPSLPNGITIATMVKAAWSLVLAQKTDSHAVIFGQVVHGRTIALPGVEGIVGPCANITPVVARLGLQTTGFELMQTLQDQHRSAMPYEALDLDDALAYTKNSPVGRRGLQTIVQHQNNVMVDDMELLLGEVKCGVDVRAVDHVPKEVWVYSSVDEKRPDMLEVKIMSSTLALGEEVAEELMGLLVEKIVGLLRHPERVCV</sequence>
<gene>
    <name evidence="9" type="primary">mlfA</name>
    <name type="ORF">ASPTUDRAFT_159361</name>
</gene>
<evidence type="ECO:0000255" key="1"/>
<evidence type="ECO:0000255" key="2">
    <source>
        <dbReference type="PROSITE-ProRule" id="PRU00258"/>
    </source>
</evidence>
<evidence type="ECO:0000256" key="3">
    <source>
        <dbReference type="SAM" id="MobiDB-lite"/>
    </source>
</evidence>
<evidence type="ECO:0000269" key="4">
    <source>
    </source>
</evidence>
<evidence type="ECO:0000269" key="5">
    <source>
    </source>
</evidence>
<evidence type="ECO:0000269" key="6">
    <source>
    </source>
</evidence>
<evidence type="ECO:0000269" key="7">
    <source>
    </source>
</evidence>
<evidence type="ECO:0000269" key="8">
    <source>
    </source>
</evidence>
<evidence type="ECO:0000303" key="9">
    <source>
    </source>
</evidence>
<evidence type="ECO:0000305" key="10"/>
<evidence type="ECO:0000305" key="11">
    <source>
    </source>
</evidence>
<reference key="1">
    <citation type="journal article" date="2017" name="Genome Biol.">
        <title>Comparative genomics reveals high biological diversity and specific adaptations in the industrially and medically important fungal genus Aspergillus.</title>
        <authorList>
            <person name="de Vries R.P."/>
            <person name="Riley R."/>
            <person name="Wiebenga A."/>
            <person name="Aguilar-Osorio G."/>
            <person name="Amillis S."/>
            <person name="Uchima C.A."/>
            <person name="Anderluh G."/>
            <person name="Asadollahi M."/>
            <person name="Askin M."/>
            <person name="Barry K."/>
            <person name="Battaglia E."/>
            <person name="Bayram O."/>
            <person name="Benocci T."/>
            <person name="Braus-Stromeyer S.A."/>
            <person name="Caldana C."/>
            <person name="Canovas D."/>
            <person name="Cerqueira G.C."/>
            <person name="Chen F."/>
            <person name="Chen W."/>
            <person name="Choi C."/>
            <person name="Clum A."/>
            <person name="Dos Santos R.A."/>
            <person name="Damasio A.R."/>
            <person name="Diallinas G."/>
            <person name="Emri T."/>
            <person name="Fekete E."/>
            <person name="Flipphi M."/>
            <person name="Freyberg S."/>
            <person name="Gallo A."/>
            <person name="Gournas C."/>
            <person name="Habgood R."/>
            <person name="Hainaut M."/>
            <person name="Harispe M.L."/>
            <person name="Henrissat B."/>
            <person name="Hilden K.S."/>
            <person name="Hope R."/>
            <person name="Hossain A."/>
            <person name="Karabika E."/>
            <person name="Karaffa L."/>
            <person name="Karanyi Z."/>
            <person name="Krasevec N."/>
            <person name="Kuo A."/>
            <person name="Kusch H."/>
            <person name="LaButti K."/>
            <person name="Lagendijk E.L."/>
            <person name="Lapidus A."/>
            <person name="Levasseur A."/>
            <person name="Lindquist E."/>
            <person name="Lipzen A."/>
            <person name="Logrieco A.F."/>
            <person name="MacCabe A."/>
            <person name="Maekelae M.R."/>
            <person name="Malavazi I."/>
            <person name="Melin P."/>
            <person name="Meyer V."/>
            <person name="Mielnichuk N."/>
            <person name="Miskei M."/>
            <person name="Molnar A.P."/>
            <person name="Mule G."/>
            <person name="Ngan C.Y."/>
            <person name="Orejas M."/>
            <person name="Orosz E."/>
            <person name="Ouedraogo J.P."/>
            <person name="Overkamp K.M."/>
            <person name="Park H.-S."/>
            <person name="Perrone G."/>
            <person name="Piumi F."/>
            <person name="Punt P.J."/>
            <person name="Ram A.F."/>
            <person name="Ramon A."/>
            <person name="Rauscher S."/>
            <person name="Record E."/>
            <person name="Riano-Pachon D.M."/>
            <person name="Robert V."/>
            <person name="Roehrig J."/>
            <person name="Ruller R."/>
            <person name="Salamov A."/>
            <person name="Salih N.S."/>
            <person name="Samson R.A."/>
            <person name="Sandor E."/>
            <person name="Sanguinetti M."/>
            <person name="Schuetze T."/>
            <person name="Sepcic K."/>
            <person name="Shelest E."/>
            <person name="Sherlock G."/>
            <person name="Sophianopoulou V."/>
            <person name="Squina F.M."/>
            <person name="Sun H."/>
            <person name="Susca A."/>
            <person name="Todd R.B."/>
            <person name="Tsang A."/>
            <person name="Unkles S.E."/>
            <person name="van de Wiele N."/>
            <person name="van Rossen-Uffink D."/>
            <person name="Oliveira J.V."/>
            <person name="Vesth T.C."/>
            <person name="Visser J."/>
            <person name="Yu J.-H."/>
            <person name="Zhou M."/>
            <person name="Andersen M.R."/>
            <person name="Archer D.B."/>
            <person name="Baker S.E."/>
            <person name="Benoit I."/>
            <person name="Brakhage A.A."/>
            <person name="Braus G.H."/>
            <person name="Fischer R."/>
            <person name="Frisvad J.C."/>
            <person name="Goldman G.H."/>
            <person name="Houbraken J."/>
            <person name="Oakley B."/>
            <person name="Pocsi I."/>
            <person name="Scazzocchio C."/>
            <person name="Seiboth B."/>
            <person name="vanKuyk P.A."/>
            <person name="Wortman J."/>
            <person name="Dyer P.S."/>
            <person name="Grigoriev I.V."/>
        </authorList>
    </citation>
    <scope>NUCLEOTIDE SEQUENCE [LARGE SCALE GENOMIC DNA]</scope>
    <source>
        <strain>CBS 134.48</strain>
    </source>
</reference>
<reference key="2">
    <citation type="journal article" date="2009" name="J. Antibiot.">
        <title>Solid-phase synthesis and biological activity of malformin C and its derivatives.</title>
        <authorList>
            <person name="Kojima Y."/>
            <person name="Sunazuka T."/>
            <person name="Nagai K."/>
            <person name="Hirose T."/>
            <person name="Namatame M."/>
            <person name="Ishiyama A."/>
            <person name="Otoguro K."/>
            <person name="Omura S."/>
        </authorList>
    </citation>
    <scope>BIOTECHNOLOGY</scope>
</reference>
<reference key="3">
    <citation type="journal article" date="2015" name="PLoS ONE">
        <title>Study of malformin C, a fungal source cyclic pentapeptide, as an anti-cancer drug.</title>
        <authorList>
            <person name="Wang J."/>
            <person name="Jiang Z."/>
            <person name="Lam W."/>
            <person name="Gullen E.A."/>
            <person name="Yu Z."/>
            <person name="Wei Y."/>
            <person name="Wang L."/>
            <person name="Zeiss C."/>
            <person name="Beck A."/>
            <person name="Cheng E.C."/>
            <person name="Wu C."/>
            <person name="Cheng Y.C."/>
            <person name="Zhang Y."/>
        </authorList>
    </citation>
    <scope>BIOTECHNOLOGY</scope>
</reference>
<reference key="4">
    <citation type="journal article" date="2016" name="Cancer Chemother. Pharmacol.">
        <title>Malformin A1 promotes cell death through induction of apoptosis, necrosis and autophagy in prostate cancer cells.</title>
        <authorList>
            <person name="Liu Y."/>
            <person name="Wang M."/>
            <person name="Wang D."/>
            <person name="Li X."/>
            <person name="Wang W."/>
            <person name="Lou H."/>
            <person name="Yuan H."/>
        </authorList>
    </citation>
    <scope>BIOTECHNOLOGY</scope>
</reference>
<reference key="5">
    <citation type="journal article" date="2017" name="Int. J. Oncol.">
        <title>Malformin A1 treatment alters invasive and oncogenic phenotypes of human colorectal cancer cells through stimulation of the p38 signaling pathway.</title>
        <authorList>
            <person name="Park S.Y."/>
            <person name="Oh H.H."/>
            <person name="Park Y.L."/>
            <person name="Yu H.M."/>
            <person name="Myung D.S."/>
            <person name="Cho S.B."/>
            <person name="Lee W.S."/>
            <person name="Park D."/>
            <person name="Joo Y.E."/>
        </authorList>
    </citation>
    <scope>BIOTECHNOLOGY</scope>
</reference>
<reference key="6">
    <citation type="journal article" date="2018" name="Sci. Rep.">
        <title>Uncovering secondary metabolite evolution and biosynthesis using gene cluster networks and genetic dereplication.</title>
        <authorList>
            <person name="Theobald S."/>
            <person name="Vesth T.C."/>
            <person name="Rendsvig J.K."/>
            <person name="Nielsen K.F."/>
            <person name="Riley R."/>
            <person name="de Abreu L.M."/>
            <person name="Salamov A."/>
            <person name="Frisvad J.C."/>
            <person name="Larsen T.O."/>
            <person name="Andersen M.R."/>
            <person name="Hoof J.B."/>
        </authorList>
    </citation>
    <scope>IDENTIFICATION</scope>
    <scope>FUNCTION</scope>
    <scope>PATHWAY</scope>
</reference>
<keyword id="KW-0436">Ligase</keyword>
<keyword id="KW-0596">Phosphopantetheine</keyword>
<keyword id="KW-0597">Phosphoprotein</keyword>
<keyword id="KW-1185">Reference proteome</keyword>
<keyword id="KW-0677">Repeat</keyword>
<organism>
    <name type="scientific">Aspergillus tubingensis (strain CBS 134.48)</name>
    <dbReference type="NCBI Taxonomy" id="767770"/>
    <lineage>
        <taxon>Eukaryota</taxon>
        <taxon>Fungi</taxon>
        <taxon>Dikarya</taxon>
        <taxon>Ascomycota</taxon>
        <taxon>Pezizomycotina</taxon>
        <taxon>Eurotiomycetes</taxon>
        <taxon>Eurotiomycetidae</taxon>
        <taxon>Eurotiales</taxon>
        <taxon>Aspergillaceae</taxon>
        <taxon>Aspergillus</taxon>
        <taxon>Aspergillus subgen. Circumdati</taxon>
    </lineage>
</organism>
<dbReference type="EC" id="6.3.2.-" evidence="8"/>
<dbReference type="EMBL" id="KV878179">
    <property type="protein sequence ID" value="OJI88518.1"/>
    <property type="molecule type" value="Genomic_DNA"/>
</dbReference>
<dbReference type="SMR" id="A0A1L9NGU5"/>
<dbReference type="STRING" id="767770.A0A1L9NGU5"/>
<dbReference type="VEuPathDB" id="FungiDB:ASPTUDRAFT_159361"/>
<dbReference type="OMA" id="PAAFHCG"/>
<dbReference type="OrthoDB" id="45369at5052"/>
<dbReference type="Proteomes" id="UP000184304">
    <property type="component" value="Unassembled WGS sequence"/>
</dbReference>
<dbReference type="GO" id="GO:0005737">
    <property type="term" value="C:cytoplasm"/>
    <property type="evidence" value="ECO:0007669"/>
    <property type="project" value="TreeGrafter"/>
</dbReference>
<dbReference type="GO" id="GO:0016874">
    <property type="term" value="F:ligase activity"/>
    <property type="evidence" value="ECO:0007669"/>
    <property type="project" value="UniProtKB-KW"/>
</dbReference>
<dbReference type="GO" id="GO:0031177">
    <property type="term" value="F:phosphopantetheine binding"/>
    <property type="evidence" value="ECO:0007669"/>
    <property type="project" value="InterPro"/>
</dbReference>
<dbReference type="GO" id="GO:0043041">
    <property type="term" value="P:amino acid activation for nonribosomal peptide biosynthetic process"/>
    <property type="evidence" value="ECO:0007669"/>
    <property type="project" value="TreeGrafter"/>
</dbReference>
<dbReference type="GO" id="GO:0044550">
    <property type="term" value="P:secondary metabolite biosynthetic process"/>
    <property type="evidence" value="ECO:0007669"/>
    <property type="project" value="TreeGrafter"/>
</dbReference>
<dbReference type="CDD" id="cd05918">
    <property type="entry name" value="A_NRPS_SidN3_like"/>
    <property type="match status" value="4"/>
</dbReference>
<dbReference type="CDD" id="cd19542">
    <property type="entry name" value="CT_NRPS-like"/>
    <property type="match status" value="2"/>
</dbReference>
<dbReference type="CDD" id="cd19534">
    <property type="entry name" value="E_NRPS"/>
    <property type="match status" value="1"/>
</dbReference>
<dbReference type="CDD" id="cd19545">
    <property type="entry name" value="FUM14_C_NRPS-like"/>
    <property type="match status" value="1"/>
</dbReference>
<dbReference type="FunFam" id="3.30.559.10:FF:000016">
    <property type="entry name" value="Nonribosomal peptide synthase Pes1"/>
    <property type="match status" value="1"/>
</dbReference>
<dbReference type="FunFam" id="3.30.559.30:FF:000002">
    <property type="entry name" value="Nonribosomal peptide synthase Pes1"/>
    <property type="match status" value="1"/>
</dbReference>
<dbReference type="FunFam" id="3.30.300.30:FF:000015">
    <property type="entry name" value="Nonribosomal peptide synthase SidD"/>
    <property type="match status" value="4"/>
</dbReference>
<dbReference type="FunFam" id="3.30.559.30:FF:000003">
    <property type="entry name" value="Nonribosomal peptide synthase SidD"/>
    <property type="match status" value="1"/>
</dbReference>
<dbReference type="FunFam" id="1.10.1200.10:FF:000005">
    <property type="entry name" value="Nonribosomal peptide synthetase 1"/>
    <property type="match status" value="1"/>
</dbReference>
<dbReference type="Gene3D" id="3.30.300.30">
    <property type="match status" value="4"/>
</dbReference>
<dbReference type="Gene3D" id="1.10.1200.10">
    <property type="entry name" value="ACP-like"/>
    <property type="match status" value="4"/>
</dbReference>
<dbReference type="Gene3D" id="3.30.559.10">
    <property type="entry name" value="Chloramphenicol acetyltransferase-like domain"/>
    <property type="match status" value="5"/>
</dbReference>
<dbReference type="Gene3D" id="3.40.50.12780">
    <property type="entry name" value="N-terminal domain of ligase-like"/>
    <property type="match status" value="4"/>
</dbReference>
<dbReference type="Gene3D" id="3.30.559.30">
    <property type="entry name" value="Nonribosomal peptide synthetase, condensation domain"/>
    <property type="match status" value="5"/>
</dbReference>
<dbReference type="InterPro" id="IPR010071">
    <property type="entry name" value="AA_adenyl_dom"/>
</dbReference>
<dbReference type="InterPro" id="IPR036736">
    <property type="entry name" value="ACP-like_sf"/>
</dbReference>
<dbReference type="InterPro" id="IPR045851">
    <property type="entry name" value="AMP-bd_C_sf"/>
</dbReference>
<dbReference type="InterPro" id="IPR020845">
    <property type="entry name" value="AMP-binding_CS"/>
</dbReference>
<dbReference type="InterPro" id="IPR000873">
    <property type="entry name" value="AMP-dep_synth/lig_dom"/>
</dbReference>
<dbReference type="InterPro" id="IPR042099">
    <property type="entry name" value="ANL_N_sf"/>
</dbReference>
<dbReference type="InterPro" id="IPR023213">
    <property type="entry name" value="CAT-like_dom_sf"/>
</dbReference>
<dbReference type="InterPro" id="IPR001242">
    <property type="entry name" value="Condensatn"/>
</dbReference>
<dbReference type="InterPro" id="IPR020806">
    <property type="entry name" value="PKS_PP-bd"/>
</dbReference>
<dbReference type="InterPro" id="IPR009081">
    <property type="entry name" value="PP-bd_ACP"/>
</dbReference>
<dbReference type="InterPro" id="IPR006162">
    <property type="entry name" value="Ppantetheine_attach_site"/>
</dbReference>
<dbReference type="NCBIfam" id="TIGR01733">
    <property type="entry name" value="AA-adenyl-dom"/>
    <property type="match status" value="4"/>
</dbReference>
<dbReference type="NCBIfam" id="NF003417">
    <property type="entry name" value="PRK04813.1"/>
    <property type="match status" value="4"/>
</dbReference>
<dbReference type="PANTHER" id="PTHR45527:SF1">
    <property type="entry name" value="FATTY ACID SYNTHASE"/>
    <property type="match status" value="1"/>
</dbReference>
<dbReference type="PANTHER" id="PTHR45527">
    <property type="entry name" value="NONRIBOSOMAL PEPTIDE SYNTHETASE"/>
    <property type="match status" value="1"/>
</dbReference>
<dbReference type="Pfam" id="PF00501">
    <property type="entry name" value="AMP-binding"/>
    <property type="match status" value="4"/>
</dbReference>
<dbReference type="Pfam" id="PF00668">
    <property type="entry name" value="Condensation"/>
    <property type="match status" value="5"/>
</dbReference>
<dbReference type="Pfam" id="PF00550">
    <property type="entry name" value="PP-binding"/>
    <property type="match status" value="4"/>
</dbReference>
<dbReference type="SMART" id="SM00823">
    <property type="entry name" value="PKS_PP"/>
    <property type="match status" value="4"/>
</dbReference>
<dbReference type="SMART" id="SM01294">
    <property type="entry name" value="PKS_PP_betabranch"/>
    <property type="match status" value="1"/>
</dbReference>
<dbReference type="SUPFAM" id="SSF56801">
    <property type="entry name" value="Acetyl-CoA synthetase-like"/>
    <property type="match status" value="4"/>
</dbReference>
<dbReference type="SUPFAM" id="SSF47336">
    <property type="entry name" value="ACP-like"/>
    <property type="match status" value="4"/>
</dbReference>
<dbReference type="SUPFAM" id="SSF52777">
    <property type="entry name" value="CoA-dependent acyltransferases"/>
    <property type="match status" value="10"/>
</dbReference>
<dbReference type="PROSITE" id="PS00455">
    <property type="entry name" value="AMP_BINDING"/>
    <property type="match status" value="3"/>
</dbReference>
<dbReference type="PROSITE" id="PS50075">
    <property type="entry name" value="CARRIER"/>
    <property type="match status" value="4"/>
</dbReference>
<dbReference type="PROSITE" id="PS00012">
    <property type="entry name" value="PHOSPHOPANTETHEINE"/>
    <property type="match status" value="1"/>
</dbReference>
<protein>
    <recommendedName>
        <fullName evidence="9">Malformin synthetase mlfA</fullName>
        <ecNumber evidence="8">6.3.2.-</ecNumber>
    </recommendedName>
    <alternativeName>
        <fullName evidence="9">Malformin biosynthesis cluster protein A</fullName>
    </alternativeName>
    <alternativeName>
        <fullName evidence="9">Nonribosomal peptide synthetase mlfA</fullName>
    </alternativeName>
</protein>
<feature type="chain" id="PRO_0000446439" description="Malformin synthetase mlfA">
    <location>
        <begin position="1"/>
        <end position="5073"/>
    </location>
</feature>
<feature type="domain" description="Carrier 1" evidence="2">
    <location>
        <begin position="726"/>
        <end position="799"/>
    </location>
</feature>
<feature type="domain" description="Carrier 2" evidence="2">
    <location>
        <begin position="1823"/>
        <end position="1900"/>
    </location>
</feature>
<feature type="domain" description="Carrier 3" evidence="2">
    <location>
        <begin position="2997"/>
        <end position="3073"/>
    </location>
</feature>
<feature type="domain" description="Carrier 4" evidence="2">
    <location>
        <begin position="4544"/>
        <end position="4620"/>
    </location>
</feature>
<feature type="region of interest" description="Adenylation 1" evidence="1">
    <location>
        <begin position="194"/>
        <end position="585"/>
    </location>
</feature>
<feature type="region of interest" description="Condensation 1" evidence="1">
    <location>
        <begin position="837"/>
        <end position="1268"/>
    </location>
</feature>
<feature type="region of interest" description="Adenylation 2" evidence="1">
    <location>
        <begin position="1296"/>
        <end position="1685"/>
    </location>
</feature>
<feature type="region of interest" description="Disordered" evidence="3">
    <location>
        <begin position="1901"/>
        <end position="1930"/>
    </location>
</feature>
<feature type="region of interest" description="Disordered" evidence="3">
    <location>
        <begin position="1963"/>
        <end position="1984"/>
    </location>
</feature>
<feature type="region of interest" description="Condensation 2" evidence="1">
    <location>
        <begin position="2031"/>
        <end position="2446"/>
    </location>
</feature>
<feature type="region of interest" description="Adenylation 3" evidence="1">
    <location>
        <begin position="2469"/>
        <end position="2861"/>
    </location>
</feature>
<feature type="region of interest" description="Condensation 3" evidence="1">
    <location>
        <begin position="3090"/>
        <end position="3555"/>
    </location>
</feature>
<feature type="region of interest" description="Condensation 4" evidence="1">
    <location>
        <begin position="3576"/>
        <end position="3995"/>
    </location>
</feature>
<feature type="region of interest" description="Adenylation 4" evidence="1">
    <location>
        <begin position="4020"/>
        <end position="4410"/>
    </location>
</feature>
<feature type="region of interest" description="Disordered" evidence="3">
    <location>
        <begin position="4611"/>
        <end position="4633"/>
    </location>
</feature>
<feature type="region of interest" description="Condensation 5" evidence="1">
    <location>
        <begin position="4657"/>
        <end position="4991"/>
    </location>
</feature>
<feature type="compositionally biased region" description="Low complexity" evidence="3">
    <location>
        <begin position="1903"/>
        <end position="1927"/>
    </location>
</feature>
<feature type="compositionally biased region" description="Low complexity" evidence="3">
    <location>
        <begin position="1965"/>
        <end position="1982"/>
    </location>
</feature>
<feature type="compositionally biased region" description="Polar residues" evidence="3">
    <location>
        <begin position="4617"/>
        <end position="4631"/>
    </location>
</feature>
<feature type="modified residue" description="O-(pantetheine 4'-phosphoryl)serine" evidence="2">
    <location>
        <position position="760"/>
    </location>
</feature>
<feature type="modified residue" description="O-(pantetheine 4'-phosphoryl)serine" evidence="2">
    <location>
        <position position="1860"/>
    </location>
</feature>
<feature type="modified residue" description="O-(pantetheine 4'-phosphoryl)serine" evidence="2">
    <location>
        <position position="3034"/>
    </location>
</feature>
<feature type="modified residue" description="O-(pantetheine 4'-phosphoryl)serine" evidence="2">
    <location>
        <position position="4581"/>
    </location>
</feature>